<protein>
    <recommendedName>
        <fullName evidence="1">Small ribosomal subunit protein bS21</fullName>
    </recommendedName>
    <alternativeName>
        <fullName evidence="3">30S ribosomal protein S21</fullName>
    </alternativeName>
</protein>
<keyword id="KW-1185">Reference proteome</keyword>
<keyword id="KW-0687">Ribonucleoprotein</keyword>
<keyword id="KW-0689">Ribosomal protein</keyword>
<comment type="similarity">
    <text evidence="1">Belongs to the bacterial ribosomal protein bS21 family.</text>
</comment>
<comment type="sequence caution" evidence="3">
    <conflict type="erroneous initiation">
        <sequence resource="EMBL-CDS" id="AAV61094"/>
    </conflict>
</comment>
<gene>
    <name evidence="1" type="primary">rpsU</name>
    <name type="ordered locus">stu1490</name>
</gene>
<feature type="chain" id="PRO_0000266782" description="Small ribosomal subunit protein bS21">
    <location>
        <begin position="1"/>
        <end position="58"/>
    </location>
</feature>
<feature type="region of interest" description="Disordered" evidence="2">
    <location>
        <begin position="24"/>
        <end position="58"/>
    </location>
</feature>
<feature type="compositionally biased region" description="Basic and acidic residues" evidence="2">
    <location>
        <begin position="31"/>
        <end position="42"/>
    </location>
</feature>
<feature type="compositionally biased region" description="Basic residues" evidence="2">
    <location>
        <begin position="43"/>
        <end position="58"/>
    </location>
</feature>
<dbReference type="EMBL" id="CP000023">
    <property type="protein sequence ID" value="AAV61094.1"/>
    <property type="status" value="ALT_INIT"/>
    <property type="molecule type" value="Genomic_DNA"/>
</dbReference>
<dbReference type="RefSeq" id="WP_011226340.1">
    <property type="nucleotide sequence ID" value="NC_006448.1"/>
</dbReference>
<dbReference type="SMR" id="Q5M3E1"/>
<dbReference type="STRING" id="264199.stu1490"/>
<dbReference type="DNASU" id="3165607"/>
<dbReference type="GeneID" id="66899238"/>
<dbReference type="KEGG" id="stl:stu1490"/>
<dbReference type="eggNOG" id="COG0828">
    <property type="taxonomic scope" value="Bacteria"/>
</dbReference>
<dbReference type="HOGENOM" id="CLU_159258_3_2_9"/>
<dbReference type="Proteomes" id="UP000001170">
    <property type="component" value="Chromosome"/>
</dbReference>
<dbReference type="GO" id="GO:1990904">
    <property type="term" value="C:ribonucleoprotein complex"/>
    <property type="evidence" value="ECO:0007669"/>
    <property type="project" value="UniProtKB-KW"/>
</dbReference>
<dbReference type="GO" id="GO:0005840">
    <property type="term" value="C:ribosome"/>
    <property type="evidence" value="ECO:0007669"/>
    <property type="project" value="UniProtKB-KW"/>
</dbReference>
<dbReference type="GO" id="GO:0003735">
    <property type="term" value="F:structural constituent of ribosome"/>
    <property type="evidence" value="ECO:0007669"/>
    <property type="project" value="InterPro"/>
</dbReference>
<dbReference type="GO" id="GO:0006412">
    <property type="term" value="P:translation"/>
    <property type="evidence" value="ECO:0007669"/>
    <property type="project" value="UniProtKB-UniRule"/>
</dbReference>
<dbReference type="Gene3D" id="1.20.5.1150">
    <property type="entry name" value="Ribosomal protein S8"/>
    <property type="match status" value="1"/>
</dbReference>
<dbReference type="HAMAP" id="MF_00358">
    <property type="entry name" value="Ribosomal_bS21"/>
    <property type="match status" value="1"/>
</dbReference>
<dbReference type="InterPro" id="IPR001911">
    <property type="entry name" value="Ribosomal_bS21"/>
</dbReference>
<dbReference type="InterPro" id="IPR018278">
    <property type="entry name" value="Ribosomal_bS21_CS"/>
</dbReference>
<dbReference type="InterPro" id="IPR038380">
    <property type="entry name" value="Ribosomal_bS21_sf"/>
</dbReference>
<dbReference type="NCBIfam" id="TIGR00030">
    <property type="entry name" value="S21p"/>
    <property type="match status" value="1"/>
</dbReference>
<dbReference type="PANTHER" id="PTHR21109">
    <property type="entry name" value="MITOCHONDRIAL 28S RIBOSOMAL PROTEIN S21"/>
    <property type="match status" value="1"/>
</dbReference>
<dbReference type="PANTHER" id="PTHR21109:SF22">
    <property type="entry name" value="SMALL RIBOSOMAL SUBUNIT PROTEIN BS21"/>
    <property type="match status" value="1"/>
</dbReference>
<dbReference type="Pfam" id="PF01165">
    <property type="entry name" value="Ribosomal_S21"/>
    <property type="match status" value="1"/>
</dbReference>
<dbReference type="PRINTS" id="PR00976">
    <property type="entry name" value="RIBOSOMALS21"/>
</dbReference>
<dbReference type="PROSITE" id="PS01181">
    <property type="entry name" value="RIBOSOMAL_S21"/>
    <property type="match status" value="1"/>
</dbReference>
<proteinExistence type="inferred from homology"/>
<evidence type="ECO:0000255" key="1">
    <source>
        <dbReference type="HAMAP-Rule" id="MF_00358"/>
    </source>
</evidence>
<evidence type="ECO:0000256" key="2">
    <source>
        <dbReference type="SAM" id="MobiDB-lite"/>
    </source>
</evidence>
<evidence type="ECO:0000305" key="3"/>
<organism>
    <name type="scientific">Streptococcus thermophilus (strain ATCC BAA-250 / LMG 18311)</name>
    <dbReference type="NCBI Taxonomy" id="264199"/>
    <lineage>
        <taxon>Bacteria</taxon>
        <taxon>Bacillati</taxon>
        <taxon>Bacillota</taxon>
        <taxon>Bacilli</taxon>
        <taxon>Lactobacillales</taxon>
        <taxon>Streptococcaceae</taxon>
        <taxon>Streptococcus</taxon>
    </lineage>
</organism>
<sequence>MSKIVVRKNESLDDALRRFKRSVTKAGTLQEARKREHYEKPSVKRKRKSEAARKRKKI</sequence>
<accession>Q5M3E1</accession>
<reference key="1">
    <citation type="journal article" date="2004" name="Nat. Biotechnol.">
        <title>Complete sequence and comparative genome analysis of the dairy bacterium Streptococcus thermophilus.</title>
        <authorList>
            <person name="Bolotin A."/>
            <person name="Quinquis B."/>
            <person name="Renault P."/>
            <person name="Sorokin A."/>
            <person name="Ehrlich S.D."/>
            <person name="Kulakauskas S."/>
            <person name="Lapidus A."/>
            <person name="Goltsman E."/>
            <person name="Mazur M."/>
            <person name="Pusch G.D."/>
            <person name="Fonstein M."/>
            <person name="Overbeek R."/>
            <person name="Kyprides N."/>
            <person name="Purnelle B."/>
            <person name="Prozzi D."/>
            <person name="Ngui K."/>
            <person name="Masuy D."/>
            <person name="Hancy F."/>
            <person name="Burteau S."/>
            <person name="Boutry M."/>
            <person name="Delcour J."/>
            <person name="Goffeau A."/>
            <person name="Hols P."/>
        </authorList>
    </citation>
    <scope>NUCLEOTIDE SEQUENCE [LARGE SCALE GENOMIC DNA]</scope>
    <source>
        <strain>ATCC BAA-250 / LMG 18311</strain>
    </source>
</reference>
<name>RS21_STRT2</name>